<comment type="function">
    <text evidence="1">Presumably involved in the processing and regular turnover of intracellular proteins. Catalyzes the removal of unsubstituted N-terminal amino acids from various peptides.</text>
</comment>
<comment type="catalytic activity">
    <reaction evidence="1">
        <text>Release of an N-terminal amino acid, Xaa-|-Yaa-, in which Xaa is preferably Leu, but may be other amino acids including Pro although not Arg or Lys, and Yaa may be Pro. Amino acid amides and methyl esters are also readily hydrolyzed, but rates on arylamides are exceedingly low.</text>
        <dbReference type="EC" id="3.4.11.1"/>
    </reaction>
</comment>
<comment type="catalytic activity">
    <reaction evidence="1">
        <text>Release of an N-terminal amino acid, preferentially leucine, but not glutamic or aspartic acids.</text>
        <dbReference type="EC" id="3.4.11.10"/>
    </reaction>
</comment>
<comment type="cofactor">
    <cofactor evidence="1">
        <name>Mn(2+)</name>
        <dbReference type="ChEBI" id="CHEBI:29035"/>
    </cofactor>
    <text evidence="1">Binds 2 manganese ions per subunit.</text>
</comment>
<comment type="subcellular location">
    <subcellularLocation>
        <location evidence="1">Cytoplasm</location>
    </subcellularLocation>
</comment>
<comment type="similarity">
    <text evidence="1">Belongs to the peptidase M17 family.</text>
</comment>
<gene>
    <name evidence="1" type="primary">pepA</name>
    <name type="ordered locus">BCQ_4743</name>
</gene>
<protein>
    <recommendedName>
        <fullName evidence="1">Probable cytosol aminopeptidase</fullName>
        <ecNumber evidence="1">3.4.11.1</ecNumber>
    </recommendedName>
    <alternativeName>
        <fullName evidence="1">Leucine aminopeptidase</fullName>
        <shortName evidence="1">LAP</shortName>
        <ecNumber evidence="1">3.4.11.10</ecNumber>
    </alternativeName>
    <alternativeName>
        <fullName evidence="1">Leucyl aminopeptidase</fullName>
    </alternativeName>
</protein>
<keyword id="KW-0031">Aminopeptidase</keyword>
<keyword id="KW-0963">Cytoplasm</keyword>
<keyword id="KW-0378">Hydrolase</keyword>
<keyword id="KW-0464">Manganese</keyword>
<keyword id="KW-0479">Metal-binding</keyword>
<keyword id="KW-0645">Protease</keyword>
<evidence type="ECO:0000255" key="1">
    <source>
        <dbReference type="HAMAP-Rule" id="MF_00181"/>
    </source>
</evidence>
<sequence>MFQVQKELASHEAVIVALFEEEETSSFVQELDKAFEGQLQVLLEEKELSTKKKAISKVHSLGKTEVKRYYFVGLGKKESYTTETLRSALGKTFKTLQAAKVQDAAILLDSFVTEKLDAIDVAHIAAEVQGLGTYELQTYKSDKKDRVELEKFTAITAEDAQEIEAALTVGYVHGRATNSARTLVNMPPNVLTATKLAEYAVELAEKYDMDYKVLEKEEMEELGMGALLAVNQGSVEPPKMIALIYKGKEEWTDVIGFVGKGITYDTGGYSLKPREGMVGMKGDMGGAAAVLGAMEIIGELRPEQNVIAVIPSTDNVVSGTAFKPDDVITSMSGKTIEVLNTDAEGRLALADGITYAKKLGANYLIDVATLTGGVIVALGNHTTGAMTNNEELFEQVLEASMETDESIWQLPIFDRDKERVRNSKFADLNNSPGREGHAVMAGTFLGEFAEDTPWVHLDIAGTSESSGAHDLGPAGATGAMVRTLATLVERFGEE</sequence>
<accession>B9J3C5</accession>
<feature type="chain" id="PRO_1000192706" description="Probable cytosol aminopeptidase">
    <location>
        <begin position="1"/>
        <end position="494"/>
    </location>
</feature>
<feature type="active site" evidence="1">
    <location>
        <position position="272"/>
    </location>
</feature>
<feature type="active site" evidence="1">
    <location>
        <position position="346"/>
    </location>
</feature>
<feature type="binding site" evidence="1">
    <location>
        <position position="260"/>
    </location>
    <ligand>
        <name>Mn(2+)</name>
        <dbReference type="ChEBI" id="CHEBI:29035"/>
        <label>2</label>
    </ligand>
</feature>
<feature type="binding site" evidence="1">
    <location>
        <position position="265"/>
    </location>
    <ligand>
        <name>Mn(2+)</name>
        <dbReference type="ChEBI" id="CHEBI:29035"/>
        <label>1</label>
    </ligand>
</feature>
<feature type="binding site" evidence="1">
    <location>
        <position position="265"/>
    </location>
    <ligand>
        <name>Mn(2+)</name>
        <dbReference type="ChEBI" id="CHEBI:29035"/>
        <label>2</label>
    </ligand>
</feature>
<feature type="binding site" evidence="1">
    <location>
        <position position="283"/>
    </location>
    <ligand>
        <name>Mn(2+)</name>
        <dbReference type="ChEBI" id="CHEBI:29035"/>
        <label>2</label>
    </ligand>
</feature>
<feature type="binding site" evidence="1">
    <location>
        <position position="342"/>
    </location>
    <ligand>
        <name>Mn(2+)</name>
        <dbReference type="ChEBI" id="CHEBI:29035"/>
        <label>1</label>
    </ligand>
</feature>
<feature type="binding site" evidence="1">
    <location>
        <position position="344"/>
    </location>
    <ligand>
        <name>Mn(2+)</name>
        <dbReference type="ChEBI" id="CHEBI:29035"/>
        <label>1</label>
    </ligand>
</feature>
<feature type="binding site" evidence="1">
    <location>
        <position position="344"/>
    </location>
    <ligand>
        <name>Mn(2+)</name>
        <dbReference type="ChEBI" id="CHEBI:29035"/>
        <label>2</label>
    </ligand>
</feature>
<proteinExistence type="inferred from homology"/>
<reference key="1">
    <citation type="journal article" date="2009" name="J. Bacteriol.">
        <title>Complete genome sequence of the extremophilic Bacillus cereus strain Q1 with industrial applications.</title>
        <authorList>
            <person name="Xiong Z."/>
            <person name="Jiang Y."/>
            <person name="Qi D."/>
            <person name="Lu H."/>
            <person name="Yang F."/>
            <person name="Yang J."/>
            <person name="Chen L."/>
            <person name="Sun L."/>
            <person name="Xu X."/>
            <person name="Xue Y."/>
            <person name="Zhu Y."/>
            <person name="Jin Q."/>
        </authorList>
    </citation>
    <scope>NUCLEOTIDE SEQUENCE [LARGE SCALE GENOMIC DNA]</scope>
    <source>
        <strain>Q1</strain>
    </source>
</reference>
<dbReference type="EC" id="3.4.11.1" evidence="1"/>
<dbReference type="EC" id="3.4.11.10" evidence="1"/>
<dbReference type="EMBL" id="CP000227">
    <property type="protein sequence ID" value="ACM15144.1"/>
    <property type="molecule type" value="Genomic_DNA"/>
</dbReference>
<dbReference type="SMR" id="B9J3C5"/>
<dbReference type="MEROPS" id="M17.010"/>
<dbReference type="KEGG" id="bcq:BCQ_4743"/>
<dbReference type="HOGENOM" id="CLU_013734_6_0_9"/>
<dbReference type="Proteomes" id="UP000000441">
    <property type="component" value="Chromosome"/>
</dbReference>
<dbReference type="GO" id="GO:0005737">
    <property type="term" value="C:cytoplasm"/>
    <property type="evidence" value="ECO:0007669"/>
    <property type="project" value="UniProtKB-SubCell"/>
</dbReference>
<dbReference type="GO" id="GO:0030145">
    <property type="term" value="F:manganese ion binding"/>
    <property type="evidence" value="ECO:0007669"/>
    <property type="project" value="UniProtKB-UniRule"/>
</dbReference>
<dbReference type="GO" id="GO:0070006">
    <property type="term" value="F:metalloaminopeptidase activity"/>
    <property type="evidence" value="ECO:0007669"/>
    <property type="project" value="InterPro"/>
</dbReference>
<dbReference type="GO" id="GO:0006508">
    <property type="term" value="P:proteolysis"/>
    <property type="evidence" value="ECO:0007669"/>
    <property type="project" value="UniProtKB-KW"/>
</dbReference>
<dbReference type="CDD" id="cd00433">
    <property type="entry name" value="Peptidase_M17"/>
    <property type="match status" value="1"/>
</dbReference>
<dbReference type="Gene3D" id="3.40.220.10">
    <property type="entry name" value="Leucine Aminopeptidase, subunit E, domain 1"/>
    <property type="match status" value="1"/>
</dbReference>
<dbReference type="Gene3D" id="3.40.630.10">
    <property type="entry name" value="Zn peptidases"/>
    <property type="match status" value="1"/>
</dbReference>
<dbReference type="HAMAP" id="MF_00181">
    <property type="entry name" value="Cytosol_peptidase_M17"/>
    <property type="match status" value="1"/>
</dbReference>
<dbReference type="InterPro" id="IPR011356">
    <property type="entry name" value="Leucine_aapep/pepB"/>
</dbReference>
<dbReference type="InterPro" id="IPR043472">
    <property type="entry name" value="Macro_dom-like"/>
</dbReference>
<dbReference type="InterPro" id="IPR000819">
    <property type="entry name" value="Peptidase_M17_C"/>
</dbReference>
<dbReference type="InterPro" id="IPR023042">
    <property type="entry name" value="Peptidase_M17_leu_NH2_pept"/>
</dbReference>
<dbReference type="InterPro" id="IPR008283">
    <property type="entry name" value="Peptidase_M17_N"/>
</dbReference>
<dbReference type="NCBIfam" id="NF002073">
    <property type="entry name" value="PRK00913.1-2"/>
    <property type="match status" value="1"/>
</dbReference>
<dbReference type="NCBIfam" id="NF002074">
    <property type="entry name" value="PRK00913.1-4"/>
    <property type="match status" value="1"/>
</dbReference>
<dbReference type="NCBIfam" id="NF002083">
    <property type="entry name" value="PRK00913.3-5"/>
    <property type="match status" value="1"/>
</dbReference>
<dbReference type="PANTHER" id="PTHR11963:SF23">
    <property type="entry name" value="CYTOSOL AMINOPEPTIDASE"/>
    <property type="match status" value="1"/>
</dbReference>
<dbReference type="PANTHER" id="PTHR11963">
    <property type="entry name" value="LEUCINE AMINOPEPTIDASE-RELATED"/>
    <property type="match status" value="1"/>
</dbReference>
<dbReference type="Pfam" id="PF00883">
    <property type="entry name" value="Peptidase_M17"/>
    <property type="match status" value="1"/>
</dbReference>
<dbReference type="Pfam" id="PF02789">
    <property type="entry name" value="Peptidase_M17_N"/>
    <property type="match status" value="1"/>
</dbReference>
<dbReference type="PRINTS" id="PR00481">
    <property type="entry name" value="LAMNOPPTDASE"/>
</dbReference>
<dbReference type="SUPFAM" id="SSF52949">
    <property type="entry name" value="Macro domain-like"/>
    <property type="match status" value="1"/>
</dbReference>
<dbReference type="SUPFAM" id="SSF53187">
    <property type="entry name" value="Zn-dependent exopeptidases"/>
    <property type="match status" value="1"/>
</dbReference>
<dbReference type="PROSITE" id="PS00631">
    <property type="entry name" value="CYTOSOL_AP"/>
    <property type="match status" value="1"/>
</dbReference>
<name>AMPA_BACCQ</name>
<organism>
    <name type="scientific">Bacillus cereus (strain Q1)</name>
    <dbReference type="NCBI Taxonomy" id="361100"/>
    <lineage>
        <taxon>Bacteria</taxon>
        <taxon>Bacillati</taxon>
        <taxon>Bacillota</taxon>
        <taxon>Bacilli</taxon>
        <taxon>Bacillales</taxon>
        <taxon>Bacillaceae</taxon>
        <taxon>Bacillus</taxon>
        <taxon>Bacillus cereus group</taxon>
    </lineage>
</organism>